<reference key="1">
    <citation type="journal article" date="2006" name="Proc. Natl. Acad. Sci. U.S.A.">
        <title>The complete genome of Rhodococcus sp. RHA1 provides insights into a catabolic powerhouse.</title>
        <authorList>
            <person name="McLeod M.P."/>
            <person name="Warren R.L."/>
            <person name="Hsiao W.W.L."/>
            <person name="Araki N."/>
            <person name="Myhre M."/>
            <person name="Fernandes C."/>
            <person name="Miyazawa D."/>
            <person name="Wong W."/>
            <person name="Lillquist A.L."/>
            <person name="Wang D."/>
            <person name="Dosanjh M."/>
            <person name="Hara H."/>
            <person name="Petrescu A."/>
            <person name="Morin R.D."/>
            <person name="Yang G."/>
            <person name="Stott J.M."/>
            <person name="Schein J.E."/>
            <person name="Shin H."/>
            <person name="Smailus D."/>
            <person name="Siddiqui A.S."/>
            <person name="Marra M.A."/>
            <person name="Jones S.J.M."/>
            <person name="Holt R."/>
            <person name="Brinkman F.S.L."/>
            <person name="Miyauchi K."/>
            <person name="Fukuda M."/>
            <person name="Davies J.E."/>
            <person name="Mohn W.W."/>
            <person name="Eltis L.D."/>
        </authorList>
    </citation>
    <scope>NUCLEOTIDE SEQUENCE [LARGE SCALE GENOMIC DNA]</scope>
    <source>
        <strain>RHA1</strain>
    </source>
</reference>
<keyword id="KW-0028">Amino-acid biosynthesis</keyword>
<keyword id="KW-0055">Arginine biosynthesis</keyword>
<keyword id="KW-0067">ATP-binding</keyword>
<keyword id="KW-0963">Cytoplasm</keyword>
<keyword id="KW-0436">Ligase</keyword>
<keyword id="KW-0547">Nucleotide-binding</keyword>
<organism>
    <name type="scientific">Rhodococcus jostii (strain RHA1)</name>
    <dbReference type="NCBI Taxonomy" id="101510"/>
    <lineage>
        <taxon>Bacteria</taxon>
        <taxon>Bacillati</taxon>
        <taxon>Actinomycetota</taxon>
        <taxon>Actinomycetes</taxon>
        <taxon>Mycobacteriales</taxon>
        <taxon>Nocardiaceae</taxon>
        <taxon>Rhodococcus</taxon>
    </lineage>
</organism>
<accession>Q0SI58</accession>
<protein>
    <recommendedName>
        <fullName evidence="1">Argininosuccinate synthase</fullName>
        <ecNumber evidence="1">6.3.4.5</ecNumber>
    </recommendedName>
    <alternativeName>
        <fullName evidence="1">Citrulline--aspartate ligase</fullName>
    </alternativeName>
</protein>
<feature type="chain" id="PRO_0000263964" description="Argininosuccinate synthase">
    <location>
        <begin position="1"/>
        <end position="399"/>
    </location>
</feature>
<feature type="binding site" evidence="1">
    <location>
        <begin position="8"/>
        <end position="16"/>
    </location>
    <ligand>
        <name>ATP</name>
        <dbReference type="ChEBI" id="CHEBI:30616"/>
    </ligand>
</feature>
<feature type="binding site" evidence="1">
    <location>
        <position position="87"/>
    </location>
    <ligand>
        <name>L-citrulline</name>
        <dbReference type="ChEBI" id="CHEBI:57743"/>
    </ligand>
</feature>
<feature type="binding site" evidence="1">
    <location>
        <position position="117"/>
    </location>
    <ligand>
        <name>ATP</name>
        <dbReference type="ChEBI" id="CHEBI:30616"/>
    </ligand>
</feature>
<feature type="binding site" evidence="1">
    <location>
        <position position="119"/>
    </location>
    <ligand>
        <name>L-aspartate</name>
        <dbReference type="ChEBI" id="CHEBI:29991"/>
    </ligand>
</feature>
<feature type="binding site" evidence="1">
    <location>
        <position position="123"/>
    </location>
    <ligand>
        <name>L-aspartate</name>
        <dbReference type="ChEBI" id="CHEBI:29991"/>
    </ligand>
</feature>
<feature type="binding site" evidence="1">
    <location>
        <position position="123"/>
    </location>
    <ligand>
        <name>L-citrulline</name>
        <dbReference type="ChEBI" id="CHEBI:57743"/>
    </ligand>
</feature>
<feature type="binding site" evidence="1">
    <location>
        <position position="124"/>
    </location>
    <ligand>
        <name>L-aspartate</name>
        <dbReference type="ChEBI" id="CHEBI:29991"/>
    </ligand>
</feature>
<feature type="binding site" evidence="1">
    <location>
        <position position="127"/>
    </location>
    <ligand>
        <name>L-citrulline</name>
        <dbReference type="ChEBI" id="CHEBI:57743"/>
    </ligand>
</feature>
<feature type="binding site" evidence="1">
    <location>
        <position position="175"/>
    </location>
    <ligand>
        <name>L-citrulline</name>
        <dbReference type="ChEBI" id="CHEBI:57743"/>
    </ligand>
</feature>
<feature type="binding site" evidence="1">
    <location>
        <position position="260"/>
    </location>
    <ligand>
        <name>L-citrulline</name>
        <dbReference type="ChEBI" id="CHEBI:57743"/>
    </ligand>
</feature>
<feature type="binding site" evidence="1">
    <location>
        <position position="272"/>
    </location>
    <ligand>
        <name>L-citrulline</name>
        <dbReference type="ChEBI" id="CHEBI:57743"/>
    </ligand>
</feature>
<gene>
    <name evidence="1" type="primary">argG</name>
    <name type="ordered locus">RHA1_ro00950</name>
</gene>
<evidence type="ECO:0000255" key="1">
    <source>
        <dbReference type="HAMAP-Rule" id="MF_00005"/>
    </source>
</evidence>
<name>ASSY_RHOJR</name>
<comment type="catalytic activity">
    <reaction evidence="1">
        <text>L-citrulline + L-aspartate + ATP = 2-(N(omega)-L-arginino)succinate + AMP + diphosphate + H(+)</text>
        <dbReference type="Rhea" id="RHEA:10932"/>
        <dbReference type="ChEBI" id="CHEBI:15378"/>
        <dbReference type="ChEBI" id="CHEBI:29991"/>
        <dbReference type="ChEBI" id="CHEBI:30616"/>
        <dbReference type="ChEBI" id="CHEBI:33019"/>
        <dbReference type="ChEBI" id="CHEBI:57472"/>
        <dbReference type="ChEBI" id="CHEBI:57743"/>
        <dbReference type="ChEBI" id="CHEBI:456215"/>
        <dbReference type="EC" id="6.3.4.5"/>
    </reaction>
</comment>
<comment type="pathway">
    <text evidence="1">Amino-acid biosynthesis; L-arginine biosynthesis; L-arginine from L-ornithine and carbamoyl phosphate: step 2/3.</text>
</comment>
<comment type="subunit">
    <text evidence="1">Homotetramer.</text>
</comment>
<comment type="subcellular location">
    <subcellularLocation>
        <location evidence="1">Cytoplasm</location>
    </subcellularLocation>
</comment>
<comment type="similarity">
    <text evidence="1">Belongs to the argininosuccinate synthase family. Type 1 subfamily.</text>
</comment>
<sequence>MADRVVLAYSGGLDTSVAISWIGKETGKEVVAVAIDLGQGGEDMEVVRQRALDCGAVESVVVDARDEFADEYCLPTIQANALYMDRYPLVSAISRPLIVKHLVEAARAHGGTTVAHGCTGKGNDQVRFEVGFGSLAPDLDVIAPVRDYAWTREKAIAFAEENEIPINVSKKSPFSIDQNVWGRAVETGFLEDLWNAPTKDVYDYTQDPTVNWQAPDELIISFEAGRPVAIDGKPVSVLEAIQELNRRAGAQGVGRLDVVEDRLVGIKSREIYEAPGAMVLINAHQELEHVTQERELGRYKRQTEQRWSELVYDGLWFSPLKVALDTFIEKTQERVSGDIRLVLHGGAIIVNGRRSNESLYDFNLATYDEGDTFDQSYAKGFVQIHGLSSKVAAKRDLGL</sequence>
<proteinExistence type="inferred from homology"/>
<dbReference type="EC" id="6.3.4.5" evidence="1"/>
<dbReference type="EMBL" id="CP000431">
    <property type="protein sequence ID" value="ABG92778.1"/>
    <property type="molecule type" value="Genomic_DNA"/>
</dbReference>
<dbReference type="RefSeq" id="WP_009473614.1">
    <property type="nucleotide sequence ID" value="NC_008268.1"/>
</dbReference>
<dbReference type="SMR" id="Q0SI58"/>
<dbReference type="KEGG" id="rha:RHA1_ro00950"/>
<dbReference type="eggNOG" id="COG0137">
    <property type="taxonomic scope" value="Bacteria"/>
</dbReference>
<dbReference type="HOGENOM" id="CLU_032784_4_2_11"/>
<dbReference type="OrthoDB" id="9801641at2"/>
<dbReference type="UniPathway" id="UPA00068">
    <property type="reaction ID" value="UER00113"/>
</dbReference>
<dbReference type="Proteomes" id="UP000008710">
    <property type="component" value="Chromosome"/>
</dbReference>
<dbReference type="GO" id="GO:0005737">
    <property type="term" value="C:cytoplasm"/>
    <property type="evidence" value="ECO:0007669"/>
    <property type="project" value="UniProtKB-SubCell"/>
</dbReference>
<dbReference type="GO" id="GO:0004055">
    <property type="term" value="F:argininosuccinate synthase activity"/>
    <property type="evidence" value="ECO:0007669"/>
    <property type="project" value="UniProtKB-UniRule"/>
</dbReference>
<dbReference type="GO" id="GO:0005524">
    <property type="term" value="F:ATP binding"/>
    <property type="evidence" value="ECO:0007669"/>
    <property type="project" value="UniProtKB-UniRule"/>
</dbReference>
<dbReference type="GO" id="GO:0000053">
    <property type="term" value="P:argininosuccinate metabolic process"/>
    <property type="evidence" value="ECO:0007669"/>
    <property type="project" value="TreeGrafter"/>
</dbReference>
<dbReference type="GO" id="GO:0006526">
    <property type="term" value="P:L-arginine biosynthetic process"/>
    <property type="evidence" value="ECO:0007669"/>
    <property type="project" value="UniProtKB-UniRule"/>
</dbReference>
<dbReference type="GO" id="GO:0000050">
    <property type="term" value="P:urea cycle"/>
    <property type="evidence" value="ECO:0007669"/>
    <property type="project" value="TreeGrafter"/>
</dbReference>
<dbReference type="CDD" id="cd01999">
    <property type="entry name" value="ASS"/>
    <property type="match status" value="1"/>
</dbReference>
<dbReference type="FunFam" id="3.40.50.620:FF:000038">
    <property type="entry name" value="Argininosuccinate synthase"/>
    <property type="match status" value="1"/>
</dbReference>
<dbReference type="FunFam" id="3.90.1260.10:FF:000007">
    <property type="entry name" value="Argininosuccinate synthase"/>
    <property type="match status" value="1"/>
</dbReference>
<dbReference type="Gene3D" id="3.90.1260.10">
    <property type="entry name" value="Argininosuccinate synthetase, chain A, domain 2"/>
    <property type="match status" value="1"/>
</dbReference>
<dbReference type="Gene3D" id="3.40.50.620">
    <property type="entry name" value="HUPs"/>
    <property type="match status" value="1"/>
</dbReference>
<dbReference type="Gene3D" id="1.20.5.470">
    <property type="entry name" value="Single helix bin"/>
    <property type="match status" value="1"/>
</dbReference>
<dbReference type="HAMAP" id="MF_00005">
    <property type="entry name" value="Arg_succ_synth_type1"/>
    <property type="match status" value="1"/>
</dbReference>
<dbReference type="InterPro" id="IPR048268">
    <property type="entry name" value="Arginosuc_syn_C"/>
</dbReference>
<dbReference type="InterPro" id="IPR048267">
    <property type="entry name" value="Arginosuc_syn_N"/>
</dbReference>
<dbReference type="InterPro" id="IPR001518">
    <property type="entry name" value="Arginosuc_synth"/>
</dbReference>
<dbReference type="InterPro" id="IPR018223">
    <property type="entry name" value="Arginosuc_synth_CS"/>
</dbReference>
<dbReference type="InterPro" id="IPR023434">
    <property type="entry name" value="Arginosuc_synth_type_1_subfam"/>
</dbReference>
<dbReference type="InterPro" id="IPR024074">
    <property type="entry name" value="AS_cat/multimer_dom_body"/>
</dbReference>
<dbReference type="InterPro" id="IPR014729">
    <property type="entry name" value="Rossmann-like_a/b/a_fold"/>
</dbReference>
<dbReference type="NCBIfam" id="TIGR00032">
    <property type="entry name" value="argG"/>
    <property type="match status" value="1"/>
</dbReference>
<dbReference type="NCBIfam" id="NF001770">
    <property type="entry name" value="PRK00509.1"/>
    <property type="match status" value="1"/>
</dbReference>
<dbReference type="PANTHER" id="PTHR11587">
    <property type="entry name" value="ARGININOSUCCINATE SYNTHASE"/>
    <property type="match status" value="1"/>
</dbReference>
<dbReference type="PANTHER" id="PTHR11587:SF2">
    <property type="entry name" value="ARGININOSUCCINATE SYNTHASE"/>
    <property type="match status" value="1"/>
</dbReference>
<dbReference type="Pfam" id="PF20979">
    <property type="entry name" value="Arginosuc_syn_C"/>
    <property type="match status" value="1"/>
</dbReference>
<dbReference type="Pfam" id="PF00764">
    <property type="entry name" value="Arginosuc_synth"/>
    <property type="match status" value="1"/>
</dbReference>
<dbReference type="SUPFAM" id="SSF52402">
    <property type="entry name" value="Adenine nucleotide alpha hydrolases-like"/>
    <property type="match status" value="1"/>
</dbReference>
<dbReference type="SUPFAM" id="SSF69864">
    <property type="entry name" value="Argininosuccinate synthetase, C-terminal domain"/>
    <property type="match status" value="1"/>
</dbReference>
<dbReference type="PROSITE" id="PS00564">
    <property type="entry name" value="ARGININOSUCCIN_SYN_1"/>
    <property type="match status" value="1"/>
</dbReference>
<dbReference type="PROSITE" id="PS00565">
    <property type="entry name" value="ARGININOSUCCIN_SYN_2"/>
    <property type="match status" value="1"/>
</dbReference>